<dbReference type="EC" id="3.6.1.-" evidence="2"/>
<dbReference type="EC" id="3.6.1.22" evidence="4"/>
<dbReference type="EMBL" id="Z68748">
    <property type="protein sequence ID" value="CAA92955.3"/>
    <property type="molecule type" value="Genomic_DNA"/>
</dbReference>
<dbReference type="EMBL" id="AF305937">
    <property type="protein sequence ID" value="AAG37064.1"/>
    <property type="molecule type" value="mRNA"/>
</dbReference>
<dbReference type="PIR" id="T20865">
    <property type="entry name" value="T20865"/>
</dbReference>
<dbReference type="RefSeq" id="NP_001129853.1">
    <property type="nucleotide sequence ID" value="NM_001136381.2"/>
</dbReference>
<dbReference type="RefSeq" id="NP_502051.2">
    <property type="nucleotide sequence ID" value="NM_069650.7"/>
</dbReference>
<dbReference type="SMR" id="Q19427"/>
<dbReference type="BioGRID" id="43096">
    <property type="interactions" value="1"/>
</dbReference>
<dbReference type="FunCoup" id="Q19427">
    <property type="interactions" value="466"/>
</dbReference>
<dbReference type="STRING" id="6239.F13H10.2a.1"/>
<dbReference type="PaxDb" id="6239-F13H10.2a"/>
<dbReference type="EnsemblMetazoa" id="F13H10.2a.1">
    <property type="protein sequence ID" value="F13H10.2a.1"/>
    <property type="gene ID" value="WBGene00003586"/>
</dbReference>
<dbReference type="GeneID" id="177996"/>
<dbReference type="KEGG" id="cel:CELE_F13H10.2"/>
<dbReference type="UCSC" id="F13H10.2">
    <property type="organism name" value="c. elegans"/>
</dbReference>
<dbReference type="AGR" id="WB:WBGene00003586"/>
<dbReference type="CTD" id="177996"/>
<dbReference type="WormBase" id="F13H10.2a">
    <property type="protein sequence ID" value="CE35474"/>
    <property type="gene ID" value="WBGene00003586"/>
    <property type="gene designation" value="ndx-9"/>
</dbReference>
<dbReference type="eggNOG" id="KOG3084">
    <property type="taxonomic scope" value="Eukaryota"/>
</dbReference>
<dbReference type="GeneTree" id="ENSGT00940000157592"/>
<dbReference type="InParanoid" id="Q19427"/>
<dbReference type="OMA" id="PGQTEIH"/>
<dbReference type="OrthoDB" id="10249612at2759"/>
<dbReference type="PhylomeDB" id="Q19427"/>
<dbReference type="Reactome" id="R-CEL-197264">
    <property type="pathway name" value="Nicotinamide salvaging"/>
</dbReference>
<dbReference type="PRO" id="PR:Q19427"/>
<dbReference type="Proteomes" id="UP000001940">
    <property type="component" value="Chromosome IV"/>
</dbReference>
<dbReference type="Bgee" id="WBGene00003586">
    <property type="expression patterns" value="Expressed in germ line (C elegans) and 4 other cell types or tissues"/>
</dbReference>
<dbReference type="ExpressionAtlas" id="Q19427">
    <property type="expression patterns" value="baseline and differential"/>
</dbReference>
<dbReference type="GO" id="GO:0005777">
    <property type="term" value="C:peroxisome"/>
    <property type="evidence" value="ECO:0000318"/>
    <property type="project" value="GO_Central"/>
</dbReference>
<dbReference type="GO" id="GO:0046872">
    <property type="term" value="F:metal ion binding"/>
    <property type="evidence" value="ECO:0007669"/>
    <property type="project" value="UniProtKB-KW"/>
</dbReference>
<dbReference type="GO" id="GO:0000210">
    <property type="term" value="F:NAD+ diphosphatase activity"/>
    <property type="evidence" value="ECO:0007669"/>
    <property type="project" value="RHEA"/>
</dbReference>
<dbReference type="GO" id="GO:0035529">
    <property type="term" value="F:NADH pyrophosphatase activity"/>
    <property type="evidence" value="ECO:0000318"/>
    <property type="project" value="GO_Central"/>
</dbReference>
<dbReference type="GO" id="GO:0110153">
    <property type="term" value="F:RNA NAD-cap (NMN-forming) hydrolase activity"/>
    <property type="evidence" value="ECO:0007669"/>
    <property type="project" value="RHEA"/>
</dbReference>
<dbReference type="GO" id="GO:0019677">
    <property type="term" value="P:NAD catabolic process"/>
    <property type="evidence" value="ECO:0000318"/>
    <property type="project" value="GO_Central"/>
</dbReference>
<dbReference type="GO" id="GO:0006734">
    <property type="term" value="P:NADH metabolic process"/>
    <property type="evidence" value="ECO:0000318"/>
    <property type="project" value="GO_Central"/>
</dbReference>
<dbReference type="GO" id="GO:0006742">
    <property type="term" value="P:NADP catabolic process"/>
    <property type="evidence" value="ECO:0000318"/>
    <property type="project" value="GO_Central"/>
</dbReference>
<dbReference type="CDD" id="cd03429">
    <property type="entry name" value="NUDIX_NADH_pyrophosphatase_Nudt13"/>
    <property type="match status" value="1"/>
</dbReference>
<dbReference type="FunFam" id="3.90.79.10:FF:000074">
    <property type="entry name" value="Mutt/nudix family protein-like protein"/>
    <property type="match status" value="1"/>
</dbReference>
<dbReference type="Gene3D" id="3.90.79.20">
    <property type="match status" value="1"/>
</dbReference>
<dbReference type="Gene3D" id="3.90.79.10">
    <property type="entry name" value="Nucleoside Triphosphate Pyrophosphohydrolase"/>
    <property type="match status" value="1"/>
</dbReference>
<dbReference type="InterPro" id="IPR049734">
    <property type="entry name" value="NudC-like_C"/>
</dbReference>
<dbReference type="InterPro" id="IPR015797">
    <property type="entry name" value="NUDIX_hydrolase-like_dom_sf"/>
</dbReference>
<dbReference type="InterPro" id="IPR020084">
    <property type="entry name" value="NUDIX_hydrolase_CS"/>
</dbReference>
<dbReference type="InterPro" id="IPR000086">
    <property type="entry name" value="NUDIX_hydrolase_dom"/>
</dbReference>
<dbReference type="PANTHER" id="PTHR11383:SF3">
    <property type="entry name" value="NAD(P)H PYROPHOSPHATASE NUDT13, MITOCHONDRIAL"/>
    <property type="match status" value="1"/>
</dbReference>
<dbReference type="PANTHER" id="PTHR11383">
    <property type="entry name" value="NUCLEOSIDE DIPHOSPHATE-LINKED MOIETY X MOTIF 13"/>
    <property type="match status" value="1"/>
</dbReference>
<dbReference type="Pfam" id="PF00293">
    <property type="entry name" value="NUDIX"/>
    <property type="match status" value="1"/>
</dbReference>
<dbReference type="SUPFAM" id="SSF55811">
    <property type="entry name" value="Nudix"/>
    <property type="match status" value="1"/>
</dbReference>
<dbReference type="PROSITE" id="PS51462">
    <property type="entry name" value="NUDIX"/>
    <property type="match status" value="1"/>
</dbReference>
<dbReference type="PROSITE" id="PS00893">
    <property type="entry name" value="NUDIX_BOX"/>
    <property type="match status" value="1"/>
</dbReference>
<accession>Q19427</accession>
<accession>Q9GPZ5</accession>
<organism>
    <name type="scientific">Caenorhabditis elegans</name>
    <dbReference type="NCBI Taxonomy" id="6239"/>
    <lineage>
        <taxon>Eukaryota</taxon>
        <taxon>Metazoa</taxon>
        <taxon>Ecdysozoa</taxon>
        <taxon>Nematoda</taxon>
        <taxon>Chromadorea</taxon>
        <taxon>Rhabditida</taxon>
        <taxon>Rhabditina</taxon>
        <taxon>Rhabditomorpha</taxon>
        <taxon>Rhabditoidea</taxon>
        <taxon>Rhabditidae</taxon>
        <taxon>Peloderinae</taxon>
        <taxon>Caenorhabditis</taxon>
    </lineage>
</organism>
<evidence type="ECO:0000250" key="1">
    <source>
        <dbReference type="UniProtKB" id="Q9BQG2"/>
    </source>
</evidence>
<evidence type="ECO:0000250" key="2">
    <source>
        <dbReference type="UniProtKB" id="Q9DCN1"/>
    </source>
</evidence>
<evidence type="ECO:0000255" key="3">
    <source>
        <dbReference type="PROSITE-ProRule" id="PRU00794"/>
    </source>
</evidence>
<evidence type="ECO:0000269" key="4">
    <source>
    </source>
</evidence>
<evidence type="ECO:0000305" key="5"/>
<comment type="function">
    <text evidence="2 4">mRNA decapping enzyme that specifically removes the nicotinamide adenine dinucleotide (NAD) cap from a subset of mRNAs by hydrolyzing the diphosphate linkage to produce nicotinamide mononucleotide (NMN) and 5' monophosphate mRNA. The NAD-cap is present at the 5'-end of some RNAs; in contrast to the canonical N7 methylguanosine (m7G) cap, the NAD cap promotes mRNA decay (By similarity). Mediates the hydrolysis of some nucleoside diphosphate derivatives (PubMed:10873676).</text>
</comment>
<comment type="catalytic activity">
    <reaction evidence="2">
        <text>a 5'-end NAD(+)-phospho-ribonucleoside in mRNA + H2O = a 5'-end phospho-adenosine-phospho-ribonucleoside in mRNA + beta-nicotinamide D-ribonucleotide + 2 H(+)</text>
        <dbReference type="Rhea" id="RHEA:60876"/>
        <dbReference type="Rhea" id="RHEA-COMP:15698"/>
        <dbReference type="Rhea" id="RHEA-COMP:15719"/>
        <dbReference type="ChEBI" id="CHEBI:14649"/>
        <dbReference type="ChEBI" id="CHEBI:15377"/>
        <dbReference type="ChEBI" id="CHEBI:15378"/>
        <dbReference type="ChEBI" id="CHEBI:144029"/>
        <dbReference type="ChEBI" id="CHEBI:144051"/>
    </reaction>
    <physiologicalReaction direction="left-to-right" evidence="2">
        <dbReference type="Rhea" id="RHEA:60877"/>
    </physiologicalReaction>
</comment>
<comment type="catalytic activity">
    <reaction evidence="4">
        <text>NAD(+) + H2O = beta-nicotinamide D-ribonucleotide + AMP + 2 H(+)</text>
        <dbReference type="Rhea" id="RHEA:11800"/>
        <dbReference type="ChEBI" id="CHEBI:14649"/>
        <dbReference type="ChEBI" id="CHEBI:15377"/>
        <dbReference type="ChEBI" id="CHEBI:15378"/>
        <dbReference type="ChEBI" id="CHEBI:57540"/>
        <dbReference type="ChEBI" id="CHEBI:456215"/>
        <dbReference type="EC" id="3.6.1.22"/>
    </reaction>
</comment>
<comment type="catalytic activity">
    <reaction evidence="4">
        <text>NADH + H2O = reduced beta-nicotinamide D-ribonucleotide + AMP + 2 H(+)</text>
        <dbReference type="Rhea" id="RHEA:48868"/>
        <dbReference type="ChEBI" id="CHEBI:15377"/>
        <dbReference type="ChEBI" id="CHEBI:15378"/>
        <dbReference type="ChEBI" id="CHEBI:57945"/>
        <dbReference type="ChEBI" id="CHEBI:90832"/>
        <dbReference type="ChEBI" id="CHEBI:456215"/>
        <dbReference type="EC" id="3.6.1.22"/>
    </reaction>
</comment>
<comment type="cofactor">
    <cofactor evidence="4">
        <name>Mg(2+)</name>
        <dbReference type="ChEBI" id="CHEBI:18420"/>
    </cofactor>
    <cofactor evidence="4">
        <name>Mn(2+)</name>
        <dbReference type="ChEBI" id="CHEBI:29035"/>
    </cofactor>
    <text evidence="4">Divalent metal cations. Binds 3 Mg(2+) or Mn(2+) ions per subunit.</text>
</comment>
<comment type="cofactor">
    <cofactor evidence="2">
        <name>Zn(2+)</name>
        <dbReference type="ChEBI" id="CHEBI:29105"/>
    </cofactor>
    <text evidence="2">Binds 1 zinc ion per subunit.</text>
</comment>
<comment type="subunit">
    <text evidence="4">Homodimer.</text>
</comment>
<comment type="similarity">
    <text evidence="5">Belongs to the Nudix hydrolase family. NudC subfamily.</text>
</comment>
<gene>
    <name type="primary">ndx-9</name>
    <name type="ORF">F13H10.2</name>
</gene>
<keyword id="KW-0378">Hydrolase</keyword>
<keyword id="KW-0460">Magnesium</keyword>
<keyword id="KW-0464">Manganese</keyword>
<keyword id="KW-0479">Metal-binding</keyword>
<keyword id="KW-0520">NAD</keyword>
<keyword id="KW-1185">Reference proteome</keyword>
<keyword id="KW-0862">Zinc</keyword>
<reference key="1">
    <citation type="journal article" date="1998" name="Science">
        <title>Genome sequence of the nematode C. elegans: a platform for investigating biology.</title>
        <authorList>
            <consortium name="The C. elegans sequencing consortium"/>
        </authorList>
    </citation>
    <scope>NUCLEOTIDE SEQUENCE [LARGE SCALE GENOMIC DNA]</scope>
    <source>
        <strain>Bristol N2</strain>
    </source>
</reference>
<reference key="2">
    <citation type="journal article" date="2000" name="Biochem. Biophys. Res. Commun.">
        <title>Cloning and characterization of the NADH pyrophosphatases from Caenorhabditis elegans and Saccharomyces cerevisiae, members of a Nudix hydrolase subfamily.</title>
        <authorList>
            <person name="Xu W."/>
            <person name="Dunn C.A."/>
            <person name="Bessman M.J."/>
        </authorList>
    </citation>
    <scope>NUCLEOTIDE SEQUENCE [MRNA] OF 27-374</scope>
    <scope>FUNCTION</scope>
    <scope>CATALYTIC ACTIVITY</scope>
    <scope>COFACTOR</scope>
    <scope>SUBUNIT</scope>
</reference>
<proteinExistence type="evidence at protein level"/>
<protein>
    <recommendedName>
        <fullName evidence="5">NAD-capped RNA hydrolase ndx-9</fullName>
        <shortName evidence="5">DeNADding enzyme ndx-9</shortName>
        <ecNumber evidence="2">3.6.1.-</ecNumber>
    </recommendedName>
    <alternativeName>
        <fullName>NADH pyrophosphatase</fullName>
        <ecNumber evidence="4">3.6.1.22</ecNumber>
    </alternativeName>
    <alternativeName>
        <fullName>Nudix hydrolase 9</fullName>
    </alternativeName>
</protein>
<feature type="chain" id="PRO_0000056959" description="NAD-capped RNA hydrolase ndx-9">
    <location>
        <begin position="1"/>
        <end position="374"/>
    </location>
</feature>
<feature type="domain" description="Nudix hydrolase" evidence="3">
    <location>
        <begin position="208"/>
        <end position="336"/>
    </location>
</feature>
<feature type="short sequence motif" description="Nudix box">
    <location>
        <begin position="244"/>
        <end position="265"/>
    </location>
</feature>
<feature type="short sequence motif" description="Microbody targeting signal" evidence="1">
    <location>
        <begin position="367"/>
        <end position="369"/>
    </location>
</feature>
<feature type="binding site" evidence="2">
    <location>
        <position position="181"/>
    </location>
    <ligand>
        <name>Zn(2+)</name>
        <dbReference type="ChEBI" id="CHEBI:29105"/>
    </ligand>
</feature>
<feature type="binding site" evidence="2">
    <location>
        <position position="184"/>
    </location>
    <ligand>
        <name>Zn(2+)</name>
        <dbReference type="ChEBI" id="CHEBI:29105"/>
    </ligand>
</feature>
<feature type="binding site" evidence="2">
    <location>
        <position position="199"/>
    </location>
    <ligand>
        <name>Zn(2+)</name>
        <dbReference type="ChEBI" id="CHEBI:29105"/>
    </ligand>
</feature>
<feature type="binding site" evidence="2">
    <location>
        <position position="202"/>
    </location>
    <ligand>
        <name>Zn(2+)</name>
        <dbReference type="ChEBI" id="CHEBI:29105"/>
    </ligand>
</feature>
<feature type="binding site" evidence="2">
    <location>
        <position position="207"/>
    </location>
    <ligand>
        <name>substrate</name>
    </ligand>
</feature>
<feature type="binding site" evidence="2">
    <location>
        <begin position="243"/>
        <end position="245"/>
    </location>
    <ligand>
        <name>substrate</name>
    </ligand>
</feature>
<feature type="binding site" evidence="2">
    <location>
        <position position="243"/>
    </location>
    <ligand>
        <name>Mg(2+)</name>
        <dbReference type="ChEBI" id="CHEBI:18420"/>
        <label>1</label>
    </ligand>
</feature>
<feature type="binding site" evidence="2">
    <location>
        <position position="259"/>
    </location>
    <ligand>
        <name>Mg(2+)</name>
        <dbReference type="ChEBI" id="CHEBI:18420"/>
        <label>2</label>
    </ligand>
</feature>
<feature type="binding site" evidence="2">
    <location>
        <position position="259"/>
    </location>
    <ligand>
        <name>Mg(2+)</name>
        <dbReference type="ChEBI" id="CHEBI:18420"/>
        <label>3</label>
    </ligand>
</feature>
<feature type="binding site" evidence="2">
    <location>
        <position position="259"/>
    </location>
    <ligand>
        <name>substrate</name>
    </ligand>
</feature>
<feature type="binding site" evidence="2">
    <location>
        <position position="263"/>
    </location>
    <ligand>
        <name>Mg(2+)</name>
        <dbReference type="ChEBI" id="CHEBI:18420"/>
        <label>1</label>
    </ligand>
</feature>
<feature type="binding site" evidence="2">
    <location>
        <position position="263"/>
    </location>
    <ligand>
        <name>Mg(2+)</name>
        <dbReference type="ChEBI" id="CHEBI:18420"/>
        <label>3</label>
    </ligand>
</feature>
<feature type="binding site" evidence="2">
    <location>
        <position position="263"/>
    </location>
    <ligand>
        <name>substrate</name>
    </ligand>
</feature>
<feature type="binding site" evidence="2">
    <location>
        <position position="307"/>
    </location>
    <ligand>
        <name>Mg(2+)</name>
        <dbReference type="ChEBI" id="CHEBI:18420"/>
        <label>1</label>
    </ligand>
</feature>
<feature type="binding site" evidence="2">
    <location>
        <position position="307"/>
    </location>
    <ligand>
        <name>Mg(2+)</name>
        <dbReference type="ChEBI" id="CHEBI:18420"/>
        <label>3</label>
    </ligand>
</feature>
<feature type="binding site" evidence="2">
    <location>
        <position position="307"/>
    </location>
    <ligand>
        <name>substrate</name>
    </ligand>
</feature>
<name>NPY1_CAEEL</name>
<sequence length="374" mass="42088">MPTFRSNIVVFNLIARRAFTTTSTKNMGFVEKVRLLDYWKIQDSALQSEFPRSRLVLMVDRRLLVTKDQPDVQMVELSFDDLKQRLGEYGLQFDLSNSCLLDALSTDVDMIPLFGTSIDAADPPEDSPISKKEVLKQLGNSLGGRFTDIRMAMLTMREERQRNLLAKFQSLTKWASIYRRCPKCAAALKMRSSKSGAECVTCQRVYYPTFSPVSITLITDPTNEHALLVRHRGSAGGVFTAVAGFAHSGESMAECARREIAEEVGIEVDSIRSLDMSQPWPMPDSSLMIAHVAVAKIDQKISVCPDELETAQWFTRHQVKEALTTTLADPLLKNLPRTLDDRQTLHYIPPAGAIAHQMIRQWVDGKLENHNSRI</sequence>